<name>YEPF_SCHPO</name>
<gene>
    <name type="ORF">SPAC23H3.15c</name>
    <name type="ORF">SPAC25H1.01c</name>
</gene>
<feature type="chain" id="PRO_0000116729" description="Uncharacterized protein C23H3.15c">
    <location>
        <begin position="1"/>
        <end position="325"/>
    </location>
</feature>
<feature type="region of interest" description="Disordered" evidence="1">
    <location>
        <begin position="1"/>
        <end position="325"/>
    </location>
</feature>
<feature type="compositionally biased region" description="Polar residues" evidence="1">
    <location>
        <begin position="1"/>
        <end position="21"/>
    </location>
</feature>
<feature type="compositionally biased region" description="Polar residues" evidence="1">
    <location>
        <begin position="29"/>
        <end position="57"/>
    </location>
</feature>
<feature type="compositionally biased region" description="Basic and acidic residues" evidence="1">
    <location>
        <begin position="86"/>
        <end position="109"/>
    </location>
</feature>
<feature type="compositionally biased region" description="Polar residues" evidence="1">
    <location>
        <begin position="114"/>
        <end position="167"/>
    </location>
</feature>
<feature type="compositionally biased region" description="Polar residues" evidence="1">
    <location>
        <begin position="174"/>
        <end position="193"/>
    </location>
</feature>
<feature type="compositionally biased region" description="Low complexity" evidence="1">
    <location>
        <begin position="200"/>
        <end position="210"/>
    </location>
</feature>
<feature type="compositionally biased region" description="Low complexity" evidence="1">
    <location>
        <begin position="252"/>
        <end position="278"/>
    </location>
</feature>
<feature type="compositionally biased region" description="Basic and acidic residues" evidence="1">
    <location>
        <begin position="282"/>
        <end position="325"/>
    </location>
</feature>
<feature type="sequence conflict" description="In Ref. 1; BAA13902." evidence="2" ref="1">
    <original>Q</original>
    <variation>H</variation>
    <location>
        <position position="38"/>
    </location>
</feature>
<feature type="sequence conflict" description="In Ref. 1; BAA13902." evidence="2" ref="1">
    <original>NSS</original>
    <variation>ISC</variation>
    <location>
        <begin position="53"/>
        <end position="55"/>
    </location>
</feature>
<feature type="sequence conflict" description="In Ref. 1; BAA13902." evidence="2" ref="1">
    <original>T</original>
    <variation>P</variation>
    <location>
        <position position="78"/>
    </location>
</feature>
<feature type="sequence conflict" description="In Ref. 1; BAA13902." evidence="2" ref="1">
    <original>K</original>
    <variation>Q</variation>
    <location>
        <position position="89"/>
    </location>
</feature>
<feature type="sequence conflict" description="In Ref. 1; BAA13902." evidence="2" ref="1">
    <original>S</original>
    <variation>C</variation>
    <location>
        <position position="145"/>
    </location>
</feature>
<feature type="sequence conflict" description="In Ref. 1; BAA13902." evidence="2" ref="1">
    <original>Y</original>
    <variation>N</variation>
    <location>
        <position position="202"/>
    </location>
</feature>
<feature type="sequence conflict" description="In Ref. 1; BAA13902." evidence="2" ref="1">
    <original>E</original>
    <variation>K</variation>
    <location>
        <position position="217"/>
    </location>
</feature>
<feature type="sequence conflict" description="In Ref. 1; BAA13902." evidence="2" ref="1">
    <original>T</original>
    <variation>I</variation>
    <location>
        <position position="228"/>
    </location>
</feature>
<keyword id="KW-1185">Reference proteome</keyword>
<reference key="1">
    <citation type="journal article" date="1997" name="DNA Res.">
        <title>Identification of open reading frames in Schizosaccharomyces pombe cDNAs.</title>
        <authorList>
            <person name="Yoshioka S."/>
            <person name="Kato K."/>
            <person name="Nakai K."/>
            <person name="Okayama H."/>
            <person name="Nojima H."/>
        </authorList>
    </citation>
    <scope>NUCLEOTIDE SEQUENCE [LARGE SCALE MRNA]</scope>
    <source>
        <strain>PR745</strain>
    </source>
</reference>
<reference key="2">
    <citation type="journal article" date="2002" name="Nature">
        <title>The genome sequence of Schizosaccharomyces pombe.</title>
        <authorList>
            <person name="Wood V."/>
            <person name="Gwilliam R."/>
            <person name="Rajandream M.A."/>
            <person name="Lyne M.H."/>
            <person name="Lyne R."/>
            <person name="Stewart A."/>
            <person name="Sgouros J.G."/>
            <person name="Peat N."/>
            <person name="Hayles J."/>
            <person name="Baker S.G."/>
            <person name="Basham D."/>
            <person name="Bowman S."/>
            <person name="Brooks K."/>
            <person name="Brown D."/>
            <person name="Brown S."/>
            <person name="Chillingworth T."/>
            <person name="Churcher C.M."/>
            <person name="Collins M."/>
            <person name="Connor R."/>
            <person name="Cronin A."/>
            <person name="Davis P."/>
            <person name="Feltwell T."/>
            <person name="Fraser A."/>
            <person name="Gentles S."/>
            <person name="Goble A."/>
            <person name="Hamlin N."/>
            <person name="Harris D.E."/>
            <person name="Hidalgo J."/>
            <person name="Hodgson G."/>
            <person name="Holroyd S."/>
            <person name="Hornsby T."/>
            <person name="Howarth S."/>
            <person name="Huckle E.J."/>
            <person name="Hunt S."/>
            <person name="Jagels K."/>
            <person name="James K.D."/>
            <person name="Jones L."/>
            <person name="Jones M."/>
            <person name="Leather S."/>
            <person name="McDonald S."/>
            <person name="McLean J."/>
            <person name="Mooney P."/>
            <person name="Moule S."/>
            <person name="Mungall K.L."/>
            <person name="Murphy L.D."/>
            <person name="Niblett D."/>
            <person name="Odell C."/>
            <person name="Oliver K."/>
            <person name="O'Neil S."/>
            <person name="Pearson D."/>
            <person name="Quail M.A."/>
            <person name="Rabbinowitsch E."/>
            <person name="Rutherford K.M."/>
            <person name="Rutter S."/>
            <person name="Saunders D."/>
            <person name="Seeger K."/>
            <person name="Sharp S."/>
            <person name="Skelton J."/>
            <person name="Simmonds M.N."/>
            <person name="Squares R."/>
            <person name="Squares S."/>
            <person name="Stevens K."/>
            <person name="Taylor K."/>
            <person name="Taylor R.G."/>
            <person name="Tivey A."/>
            <person name="Walsh S.V."/>
            <person name="Warren T."/>
            <person name="Whitehead S."/>
            <person name="Woodward J.R."/>
            <person name="Volckaert G."/>
            <person name="Aert R."/>
            <person name="Robben J."/>
            <person name="Grymonprez B."/>
            <person name="Weltjens I."/>
            <person name="Vanstreels E."/>
            <person name="Rieger M."/>
            <person name="Schaefer M."/>
            <person name="Mueller-Auer S."/>
            <person name="Gabel C."/>
            <person name="Fuchs M."/>
            <person name="Duesterhoeft A."/>
            <person name="Fritzc C."/>
            <person name="Holzer E."/>
            <person name="Moestl D."/>
            <person name="Hilbert H."/>
            <person name="Borzym K."/>
            <person name="Langer I."/>
            <person name="Beck A."/>
            <person name="Lehrach H."/>
            <person name="Reinhardt R."/>
            <person name="Pohl T.M."/>
            <person name="Eger P."/>
            <person name="Zimmermann W."/>
            <person name="Wedler H."/>
            <person name="Wambutt R."/>
            <person name="Purnelle B."/>
            <person name="Goffeau A."/>
            <person name="Cadieu E."/>
            <person name="Dreano S."/>
            <person name="Gloux S."/>
            <person name="Lelaure V."/>
            <person name="Mottier S."/>
            <person name="Galibert F."/>
            <person name="Aves S.J."/>
            <person name="Xiang Z."/>
            <person name="Hunt C."/>
            <person name="Moore K."/>
            <person name="Hurst S.M."/>
            <person name="Lucas M."/>
            <person name="Rochet M."/>
            <person name="Gaillardin C."/>
            <person name="Tallada V.A."/>
            <person name="Garzon A."/>
            <person name="Thode G."/>
            <person name="Daga R.R."/>
            <person name="Cruzado L."/>
            <person name="Jimenez J."/>
            <person name="Sanchez M."/>
            <person name="del Rey F."/>
            <person name="Benito J."/>
            <person name="Dominguez A."/>
            <person name="Revuelta J.L."/>
            <person name="Moreno S."/>
            <person name="Armstrong J."/>
            <person name="Forsburg S.L."/>
            <person name="Cerutti L."/>
            <person name="Lowe T."/>
            <person name="McCombie W.R."/>
            <person name="Paulsen I."/>
            <person name="Potashkin J."/>
            <person name="Shpakovski G.V."/>
            <person name="Ussery D."/>
            <person name="Barrell B.G."/>
            <person name="Nurse P."/>
        </authorList>
    </citation>
    <scope>NUCLEOTIDE SEQUENCE [LARGE SCALE GENOMIC DNA]</scope>
    <source>
        <strain>972 / ATCC 24843</strain>
    </source>
</reference>
<evidence type="ECO:0000256" key="1">
    <source>
        <dbReference type="SAM" id="MobiDB-lite"/>
    </source>
</evidence>
<evidence type="ECO:0000305" key="2"/>
<sequence>MSYQQRANDSMNSAKQYSSSAGAVHNSDEPFSSSGAPQNRNFDTSYTSEIPSNSSRAANDMGTDIGSGDPYAGMTSDTKKGFNSVESRKKEQSDVRGGDTSYSRRHDDSSYSSNKYSTGGNDSYSSGGRNEDYSTSGGSYTTDPSRTDDTASYGQSQYNQSRKTTQGGDYGEDYSQSYPTDTYGSRQKATPSDTVGGGAYDYSSSGSHTHGGSHGTEHRGGSYGNDNTANKTRGAVSSAGYSGEGYGKGTYATDTTAEANRRAATGTRNARTTAQRNAQLAEDEHVSMGDKMKGNMEKMAGKLTRDPELVQKGEDLKTGHHSERY</sequence>
<proteinExistence type="evidence at transcript level"/>
<accession>P78890</accession>
<accession>O13976</accession>
<protein>
    <recommendedName>
        <fullName>Uncharacterized protein C23H3.15c</fullName>
    </recommendedName>
</protein>
<dbReference type="EMBL" id="D89241">
    <property type="protein sequence ID" value="BAA13902.1"/>
    <property type="status" value="ALT_TERM"/>
    <property type="molecule type" value="mRNA"/>
</dbReference>
<dbReference type="EMBL" id="CU329670">
    <property type="protein sequence ID" value="CAB16245.1"/>
    <property type="molecule type" value="Genomic_DNA"/>
</dbReference>
<dbReference type="PIR" id="T38308">
    <property type="entry name" value="T38308"/>
</dbReference>
<dbReference type="PIR" id="T43147">
    <property type="entry name" value="T43147"/>
</dbReference>
<dbReference type="RefSeq" id="NP_593805.1">
    <property type="nucleotide sequence ID" value="NM_001019234.2"/>
</dbReference>
<dbReference type="BioGRID" id="278314">
    <property type="interactions" value="3"/>
</dbReference>
<dbReference type="STRING" id="284812.P78890"/>
<dbReference type="iPTMnet" id="P78890"/>
<dbReference type="PaxDb" id="4896-SPAC23H3.15c.1"/>
<dbReference type="EnsemblFungi" id="SPAC23H3.15c.1">
    <property type="protein sequence ID" value="SPAC23H3.15c.1:pep"/>
    <property type="gene ID" value="SPAC23H3.15c"/>
</dbReference>
<dbReference type="GeneID" id="2541823"/>
<dbReference type="KEGG" id="spo:2541823"/>
<dbReference type="PomBase" id="SPAC23H3.15c"/>
<dbReference type="VEuPathDB" id="FungiDB:SPAC23H3.15c"/>
<dbReference type="HOGENOM" id="CLU_802058_0_0_1"/>
<dbReference type="InParanoid" id="P78890"/>
<dbReference type="OMA" id="SRAANDM"/>
<dbReference type="PRO" id="PR:P78890"/>
<dbReference type="Proteomes" id="UP000002485">
    <property type="component" value="Chromosome I"/>
</dbReference>
<dbReference type="GO" id="GO:0005829">
    <property type="term" value="C:cytosol"/>
    <property type="evidence" value="ECO:0007005"/>
    <property type="project" value="PomBase"/>
</dbReference>
<dbReference type="GO" id="GO:0005634">
    <property type="term" value="C:nucleus"/>
    <property type="evidence" value="ECO:0007005"/>
    <property type="project" value="PomBase"/>
</dbReference>
<organism>
    <name type="scientific">Schizosaccharomyces pombe (strain 972 / ATCC 24843)</name>
    <name type="common">Fission yeast</name>
    <dbReference type="NCBI Taxonomy" id="284812"/>
    <lineage>
        <taxon>Eukaryota</taxon>
        <taxon>Fungi</taxon>
        <taxon>Dikarya</taxon>
        <taxon>Ascomycota</taxon>
        <taxon>Taphrinomycotina</taxon>
        <taxon>Schizosaccharomycetes</taxon>
        <taxon>Schizosaccharomycetales</taxon>
        <taxon>Schizosaccharomycetaceae</taxon>
        <taxon>Schizosaccharomyces</taxon>
    </lineage>
</organism>